<dbReference type="EC" id="2.7.7.6" evidence="1"/>
<dbReference type="EMBL" id="AJ938182">
    <property type="protein sequence ID" value="CAI81786.1"/>
    <property type="molecule type" value="Genomic_DNA"/>
</dbReference>
<dbReference type="RefSeq" id="WP_000569650.1">
    <property type="nucleotide sequence ID" value="NC_007622.1"/>
</dbReference>
<dbReference type="SMR" id="Q2YYM2"/>
<dbReference type="KEGG" id="sab:SAB2097c"/>
<dbReference type="HOGENOM" id="CLU_053084_0_1_9"/>
<dbReference type="GO" id="GO:0005737">
    <property type="term" value="C:cytoplasm"/>
    <property type="evidence" value="ECO:0007669"/>
    <property type="project" value="UniProtKB-ARBA"/>
</dbReference>
<dbReference type="GO" id="GO:0000428">
    <property type="term" value="C:DNA-directed RNA polymerase complex"/>
    <property type="evidence" value="ECO:0007669"/>
    <property type="project" value="UniProtKB-KW"/>
</dbReference>
<dbReference type="GO" id="GO:0003677">
    <property type="term" value="F:DNA binding"/>
    <property type="evidence" value="ECO:0007669"/>
    <property type="project" value="UniProtKB-UniRule"/>
</dbReference>
<dbReference type="GO" id="GO:0003899">
    <property type="term" value="F:DNA-directed RNA polymerase activity"/>
    <property type="evidence" value="ECO:0007669"/>
    <property type="project" value="UniProtKB-UniRule"/>
</dbReference>
<dbReference type="GO" id="GO:0046983">
    <property type="term" value="F:protein dimerization activity"/>
    <property type="evidence" value="ECO:0007669"/>
    <property type="project" value="InterPro"/>
</dbReference>
<dbReference type="GO" id="GO:0006351">
    <property type="term" value="P:DNA-templated transcription"/>
    <property type="evidence" value="ECO:0007669"/>
    <property type="project" value="UniProtKB-UniRule"/>
</dbReference>
<dbReference type="CDD" id="cd06928">
    <property type="entry name" value="RNAP_alpha_NTD"/>
    <property type="match status" value="1"/>
</dbReference>
<dbReference type="FunFam" id="1.10.150.20:FF:000001">
    <property type="entry name" value="DNA-directed RNA polymerase subunit alpha"/>
    <property type="match status" value="1"/>
</dbReference>
<dbReference type="FunFam" id="2.170.120.12:FF:000001">
    <property type="entry name" value="DNA-directed RNA polymerase subunit alpha"/>
    <property type="match status" value="1"/>
</dbReference>
<dbReference type="Gene3D" id="1.10.150.20">
    <property type="entry name" value="5' to 3' exonuclease, C-terminal subdomain"/>
    <property type="match status" value="1"/>
</dbReference>
<dbReference type="Gene3D" id="2.170.120.12">
    <property type="entry name" value="DNA-directed RNA polymerase, insert domain"/>
    <property type="match status" value="1"/>
</dbReference>
<dbReference type="Gene3D" id="3.30.1360.10">
    <property type="entry name" value="RNA polymerase, RBP11-like subunit"/>
    <property type="match status" value="1"/>
</dbReference>
<dbReference type="HAMAP" id="MF_00059">
    <property type="entry name" value="RNApol_bact_RpoA"/>
    <property type="match status" value="1"/>
</dbReference>
<dbReference type="InterPro" id="IPR011262">
    <property type="entry name" value="DNA-dir_RNA_pol_insert"/>
</dbReference>
<dbReference type="InterPro" id="IPR011263">
    <property type="entry name" value="DNA-dir_RNA_pol_RpoA/D/Rpb3"/>
</dbReference>
<dbReference type="InterPro" id="IPR011773">
    <property type="entry name" value="DNA-dir_RpoA"/>
</dbReference>
<dbReference type="InterPro" id="IPR036603">
    <property type="entry name" value="RBP11-like"/>
</dbReference>
<dbReference type="InterPro" id="IPR011260">
    <property type="entry name" value="RNAP_asu_C"/>
</dbReference>
<dbReference type="InterPro" id="IPR036643">
    <property type="entry name" value="RNApol_insert_sf"/>
</dbReference>
<dbReference type="NCBIfam" id="NF003513">
    <property type="entry name" value="PRK05182.1-2"/>
    <property type="match status" value="1"/>
</dbReference>
<dbReference type="NCBIfam" id="NF003515">
    <property type="entry name" value="PRK05182.2-1"/>
    <property type="match status" value="1"/>
</dbReference>
<dbReference type="NCBIfam" id="NF003519">
    <property type="entry name" value="PRK05182.2-5"/>
    <property type="match status" value="1"/>
</dbReference>
<dbReference type="NCBIfam" id="TIGR02027">
    <property type="entry name" value="rpoA"/>
    <property type="match status" value="1"/>
</dbReference>
<dbReference type="Pfam" id="PF01000">
    <property type="entry name" value="RNA_pol_A_bac"/>
    <property type="match status" value="1"/>
</dbReference>
<dbReference type="Pfam" id="PF03118">
    <property type="entry name" value="RNA_pol_A_CTD"/>
    <property type="match status" value="1"/>
</dbReference>
<dbReference type="Pfam" id="PF01193">
    <property type="entry name" value="RNA_pol_L"/>
    <property type="match status" value="1"/>
</dbReference>
<dbReference type="SMART" id="SM00662">
    <property type="entry name" value="RPOLD"/>
    <property type="match status" value="1"/>
</dbReference>
<dbReference type="SUPFAM" id="SSF47789">
    <property type="entry name" value="C-terminal domain of RNA polymerase alpha subunit"/>
    <property type="match status" value="1"/>
</dbReference>
<dbReference type="SUPFAM" id="SSF56553">
    <property type="entry name" value="Insert subdomain of RNA polymerase alpha subunit"/>
    <property type="match status" value="1"/>
</dbReference>
<dbReference type="SUPFAM" id="SSF55257">
    <property type="entry name" value="RBP11-like subunits of RNA polymerase"/>
    <property type="match status" value="1"/>
</dbReference>
<feature type="chain" id="PRO_0000264550" description="DNA-directed RNA polymerase subunit alpha">
    <location>
        <begin position="1"/>
        <end position="314"/>
    </location>
</feature>
<feature type="region of interest" description="Alpha N-terminal domain (alpha-NTD)" evidence="1">
    <location>
        <begin position="1"/>
        <end position="228"/>
    </location>
</feature>
<feature type="region of interest" description="Alpha C-terminal domain (alpha-CTD)" evidence="1">
    <location>
        <begin position="245"/>
        <end position="314"/>
    </location>
</feature>
<proteinExistence type="inferred from homology"/>
<name>RPOA_STAAB</name>
<reference key="1">
    <citation type="journal article" date="2007" name="PLoS ONE">
        <title>Molecular correlates of host specialization in Staphylococcus aureus.</title>
        <authorList>
            <person name="Herron-Olson L."/>
            <person name="Fitzgerald J.R."/>
            <person name="Musser J.M."/>
            <person name="Kapur V."/>
        </authorList>
    </citation>
    <scope>NUCLEOTIDE SEQUENCE [LARGE SCALE GENOMIC DNA]</scope>
    <source>
        <strain>bovine RF122 / ET3-1</strain>
    </source>
</reference>
<keyword id="KW-0240">DNA-directed RNA polymerase</keyword>
<keyword id="KW-0548">Nucleotidyltransferase</keyword>
<keyword id="KW-0804">Transcription</keyword>
<keyword id="KW-0808">Transferase</keyword>
<gene>
    <name evidence="1" type="primary">rpoA</name>
    <name type="ordered locus">SAB2097c</name>
</gene>
<comment type="function">
    <text evidence="1">DNA-dependent RNA polymerase catalyzes the transcription of DNA into RNA using the four ribonucleoside triphosphates as substrates.</text>
</comment>
<comment type="catalytic activity">
    <reaction evidence="1">
        <text>RNA(n) + a ribonucleoside 5'-triphosphate = RNA(n+1) + diphosphate</text>
        <dbReference type="Rhea" id="RHEA:21248"/>
        <dbReference type="Rhea" id="RHEA-COMP:14527"/>
        <dbReference type="Rhea" id="RHEA-COMP:17342"/>
        <dbReference type="ChEBI" id="CHEBI:33019"/>
        <dbReference type="ChEBI" id="CHEBI:61557"/>
        <dbReference type="ChEBI" id="CHEBI:140395"/>
        <dbReference type="EC" id="2.7.7.6"/>
    </reaction>
</comment>
<comment type="subunit">
    <text evidence="1">Homodimer. The RNAP catalytic core consists of 2 alpha, 1 beta, 1 beta' and 1 omega subunit. When a sigma factor is associated with the core the holoenzyme is formed, which can initiate transcription.</text>
</comment>
<comment type="domain">
    <text evidence="1">The N-terminal domain is essential for RNAP assembly and basal transcription, whereas the C-terminal domain is involved in interaction with transcriptional regulators and with upstream promoter elements.</text>
</comment>
<comment type="similarity">
    <text evidence="1">Belongs to the RNA polymerase alpha chain family.</text>
</comment>
<organism>
    <name type="scientific">Staphylococcus aureus (strain bovine RF122 / ET3-1)</name>
    <dbReference type="NCBI Taxonomy" id="273036"/>
    <lineage>
        <taxon>Bacteria</taxon>
        <taxon>Bacillati</taxon>
        <taxon>Bacillota</taxon>
        <taxon>Bacilli</taxon>
        <taxon>Bacillales</taxon>
        <taxon>Staphylococcaceae</taxon>
        <taxon>Staphylococcus</taxon>
    </lineage>
</organism>
<protein>
    <recommendedName>
        <fullName evidence="1">DNA-directed RNA polymerase subunit alpha</fullName>
        <shortName evidence="1">RNAP subunit alpha</shortName>
        <ecNumber evidence="1">2.7.7.6</ecNumber>
    </recommendedName>
    <alternativeName>
        <fullName evidence="1">RNA polymerase subunit alpha</fullName>
    </alternativeName>
    <alternativeName>
        <fullName evidence="1">Transcriptase subunit alpha</fullName>
    </alternativeName>
</protein>
<evidence type="ECO:0000255" key="1">
    <source>
        <dbReference type="HAMAP-Rule" id="MF_00059"/>
    </source>
</evidence>
<accession>Q2YYM2</accession>
<sequence length="314" mass="35002">MIEIEKPRIETIEISEDAKFGKFVVEPLERGYGTTLGNSLRRILLSSLSGAAVKYIEIEGVLHEFSAVDNVVEDVSTIIMNIKQLALKIYSEEDKTLEIDVRDEGEVTASDITHDSDVEILNPELKIATVSKGGHLKIRLVANKGRGYALAEQNNTSDLPIGVIPVDSLYSPVERVNYTVENTRVGQSSDFDKLTLDVWTNGSITPQESVSLAAKIMTEHLNIFVGLTDEAQNAEIMIEKEEDQKEKVLEMSIEELDLSVRSYNCLKRAGINSVQELADKSEADMMKVRNLGRKSLEEVKYKLEDLGLGLRKED</sequence>